<feature type="chain" id="PRO_1000055289" description="Large ribosomal subunit protein uL6">
    <location>
        <begin position="1"/>
        <end position="177"/>
    </location>
</feature>
<evidence type="ECO:0000255" key="1">
    <source>
        <dbReference type="HAMAP-Rule" id="MF_01365"/>
    </source>
</evidence>
<evidence type="ECO:0000305" key="2"/>
<comment type="function">
    <text evidence="1">This protein binds to the 23S rRNA, and is important in its secondary structure. It is located near the subunit interface in the base of the L7/L12 stalk, and near the tRNA binding site of the peptidyltransferase center.</text>
</comment>
<comment type="subunit">
    <text evidence="1">Part of the 50S ribosomal subunit.</text>
</comment>
<comment type="similarity">
    <text evidence="1">Belongs to the universal ribosomal protein uL6 family.</text>
</comment>
<accession>A5VXR2</accession>
<proteinExistence type="inferred from homology"/>
<organism>
    <name type="scientific">Pseudomonas putida (strain ATCC 700007 / DSM 6899 / JCM 31910 / BCRC 17059 / LMG 24140 / F1)</name>
    <dbReference type="NCBI Taxonomy" id="351746"/>
    <lineage>
        <taxon>Bacteria</taxon>
        <taxon>Pseudomonadati</taxon>
        <taxon>Pseudomonadota</taxon>
        <taxon>Gammaproteobacteria</taxon>
        <taxon>Pseudomonadales</taxon>
        <taxon>Pseudomonadaceae</taxon>
        <taxon>Pseudomonas</taxon>
    </lineage>
</organism>
<dbReference type="EMBL" id="CP000712">
    <property type="protein sequence ID" value="ABQ76672.1"/>
    <property type="molecule type" value="Genomic_DNA"/>
</dbReference>
<dbReference type="SMR" id="A5VXR2"/>
<dbReference type="KEGG" id="ppf:Pput_0502"/>
<dbReference type="eggNOG" id="COG0097">
    <property type="taxonomic scope" value="Bacteria"/>
</dbReference>
<dbReference type="HOGENOM" id="CLU_065464_1_2_6"/>
<dbReference type="GO" id="GO:0022625">
    <property type="term" value="C:cytosolic large ribosomal subunit"/>
    <property type="evidence" value="ECO:0007669"/>
    <property type="project" value="TreeGrafter"/>
</dbReference>
<dbReference type="GO" id="GO:0019843">
    <property type="term" value="F:rRNA binding"/>
    <property type="evidence" value="ECO:0007669"/>
    <property type="project" value="UniProtKB-UniRule"/>
</dbReference>
<dbReference type="GO" id="GO:0003735">
    <property type="term" value="F:structural constituent of ribosome"/>
    <property type="evidence" value="ECO:0007669"/>
    <property type="project" value="InterPro"/>
</dbReference>
<dbReference type="GO" id="GO:0002181">
    <property type="term" value="P:cytoplasmic translation"/>
    <property type="evidence" value="ECO:0007669"/>
    <property type="project" value="TreeGrafter"/>
</dbReference>
<dbReference type="FunFam" id="3.90.930.12:FF:000001">
    <property type="entry name" value="50S ribosomal protein L6"/>
    <property type="match status" value="1"/>
</dbReference>
<dbReference type="FunFam" id="3.90.930.12:FF:000002">
    <property type="entry name" value="50S ribosomal protein L6"/>
    <property type="match status" value="1"/>
</dbReference>
<dbReference type="Gene3D" id="3.90.930.12">
    <property type="entry name" value="Ribosomal protein L6, alpha-beta domain"/>
    <property type="match status" value="2"/>
</dbReference>
<dbReference type="HAMAP" id="MF_01365_B">
    <property type="entry name" value="Ribosomal_uL6_B"/>
    <property type="match status" value="1"/>
</dbReference>
<dbReference type="InterPro" id="IPR000702">
    <property type="entry name" value="Ribosomal_uL6-like"/>
</dbReference>
<dbReference type="InterPro" id="IPR036789">
    <property type="entry name" value="Ribosomal_uL6-like_a/b-dom_sf"/>
</dbReference>
<dbReference type="InterPro" id="IPR020040">
    <property type="entry name" value="Ribosomal_uL6_a/b-dom"/>
</dbReference>
<dbReference type="InterPro" id="IPR019906">
    <property type="entry name" value="Ribosomal_uL6_bac-type"/>
</dbReference>
<dbReference type="InterPro" id="IPR002358">
    <property type="entry name" value="Ribosomal_uL6_CS"/>
</dbReference>
<dbReference type="NCBIfam" id="TIGR03654">
    <property type="entry name" value="L6_bact"/>
    <property type="match status" value="1"/>
</dbReference>
<dbReference type="PANTHER" id="PTHR11655">
    <property type="entry name" value="60S/50S RIBOSOMAL PROTEIN L6/L9"/>
    <property type="match status" value="1"/>
</dbReference>
<dbReference type="PANTHER" id="PTHR11655:SF14">
    <property type="entry name" value="LARGE RIBOSOMAL SUBUNIT PROTEIN UL6M"/>
    <property type="match status" value="1"/>
</dbReference>
<dbReference type="Pfam" id="PF00347">
    <property type="entry name" value="Ribosomal_L6"/>
    <property type="match status" value="2"/>
</dbReference>
<dbReference type="PIRSF" id="PIRSF002162">
    <property type="entry name" value="Ribosomal_L6"/>
    <property type="match status" value="1"/>
</dbReference>
<dbReference type="PRINTS" id="PR00059">
    <property type="entry name" value="RIBOSOMALL6"/>
</dbReference>
<dbReference type="SUPFAM" id="SSF56053">
    <property type="entry name" value="Ribosomal protein L6"/>
    <property type="match status" value="2"/>
</dbReference>
<dbReference type="PROSITE" id="PS00525">
    <property type="entry name" value="RIBOSOMAL_L6_1"/>
    <property type="match status" value="1"/>
</dbReference>
<sequence length="177" mass="19143">MSRVAKNPVKLPSGVEVKFAGQQLSVKGAKGTLELNVHSSVEVTEESGELRFVARNGDQQARAMAGTTRALVNNMVQGVSQGFERKLQLVGVGYKAQAKGTVLNLALGFSHPVDYELPAGITAETPSQTDILIKGIDKQLVGQVAAEIRDFRPPEPYKGKGVRYADEVVRRKEAKKK</sequence>
<protein>
    <recommendedName>
        <fullName evidence="1">Large ribosomal subunit protein uL6</fullName>
    </recommendedName>
    <alternativeName>
        <fullName evidence="2">50S ribosomal protein L6</fullName>
    </alternativeName>
</protein>
<keyword id="KW-0687">Ribonucleoprotein</keyword>
<keyword id="KW-0689">Ribosomal protein</keyword>
<keyword id="KW-0694">RNA-binding</keyword>
<keyword id="KW-0699">rRNA-binding</keyword>
<reference key="1">
    <citation type="submission" date="2007-05" db="EMBL/GenBank/DDBJ databases">
        <title>Complete sequence of Pseudomonas putida F1.</title>
        <authorList>
            <consortium name="US DOE Joint Genome Institute"/>
            <person name="Copeland A."/>
            <person name="Lucas S."/>
            <person name="Lapidus A."/>
            <person name="Barry K."/>
            <person name="Detter J.C."/>
            <person name="Glavina del Rio T."/>
            <person name="Hammon N."/>
            <person name="Israni S."/>
            <person name="Dalin E."/>
            <person name="Tice H."/>
            <person name="Pitluck S."/>
            <person name="Chain P."/>
            <person name="Malfatti S."/>
            <person name="Shin M."/>
            <person name="Vergez L."/>
            <person name="Schmutz J."/>
            <person name="Larimer F."/>
            <person name="Land M."/>
            <person name="Hauser L."/>
            <person name="Kyrpides N."/>
            <person name="Lykidis A."/>
            <person name="Parales R."/>
            <person name="Richardson P."/>
        </authorList>
    </citation>
    <scope>NUCLEOTIDE SEQUENCE [LARGE SCALE GENOMIC DNA]</scope>
    <source>
        <strain>ATCC 700007 / DSM 6899 / JCM 31910 / BCRC 17059 / LMG 24140 / F1</strain>
    </source>
</reference>
<gene>
    <name evidence="1" type="primary">rplF</name>
    <name type="ordered locus">Pput_0502</name>
</gene>
<name>RL6_PSEP1</name>